<evidence type="ECO:0000250" key="1"/>
<evidence type="ECO:0000255" key="2">
    <source>
        <dbReference type="HAMAP-Rule" id="MF_00118"/>
    </source>
</evidence>
<keyword id="KW-0963">Cytoplasm</keyword>
<keyword id="KW-0251">Elongation factor</keyword>
<keyword id="KW-0342">GTP-binding</keyword>
<keyword id="KW-0378">Hydrolase</keyword>
<keyword id="KW-0460">Magnesium</keyword>
<keyword id="KW-0479">Metal-binding</keyword>
<keyword id="KW-0547">Nucleotide-binding</keyword>
<keyword id="KW-0648">Protein biosynthesis</keyword>
<keyword id="KW-1185">Reference proteome</keyword>
<name>EFTU_ACAM1</name>
<protein>
    <recommendedName>
        <fullName evidence="2">Elongation factor Tu</fullName>
        <shortName evidence="2">EF-Tu</shortName>
        <ecNumber evidence="2">3.6.5.3</ecNumber>
    </recommendedName>
</protein>
<accession>B0CCD0</accession>
<comment type="function">
    <text evidence="2">GTP hydrolase that promotes the GTP-dependent binding of aminoacyl-tRNA to the A-site of ribosomes during protein biosynthesis.</text>
</comment>
<comment type="catalytic activity">
    <reaction evidence="2">
        <text>GTP + H2O = GDP + phosphate + H(+)</text>
        <dbReference type="Rhea" id="RHEA:19669"/>
        <dbReference type="ChEBI" id="CHEBI:15377"/>
        <dbReference type="ChEBI" id="CHEBI:15378"/>
        <dbReference type="ChEBI" id="CHEBI:37565"/>
        <dbReference type="ChEBI" id="CHEBI:43474"/>
        <dbReference type="ChEBI" id="CHEBI:58189"/>
        <dbReference type="EC" id="3.6.5.3"/>
    </reaction>
    <physiologicalReaction direction="left-to-right" evidence="2">
        <dbReference type="Rhea" id="RHEA:19670"/>
    </physiologicalReaction>
</comment>
<comment type="subunit">
    <text evidence="2">Monomer.</text>
</comment>
<comment type="subcellular location">
    <subcellularLocation>
        <location evidence="2">Cytoplasm</location>
    </subcellularLocation>
</comment>
<comment type="similarity">
    <text evidence="2">Belongs to the TRAFAC class translation factor GTPase superfamily. Classic translation factor GTPase family. EF-Tu/EF-1A subfamily.</text>
</comment>
<organism>
    <name type="scientific">Acaryochloris marina (strain MBIC 11017)</name>
    <dbReference type="NCBI Taxonomy" id="329726"/>
    <lineage>
        <taxon>Bacteria</taxon>
        <taxon>Bacillati</taxon>
        <taxon>Cyanobacteriota</taxon>
        <taxon>Cyanophyceae</taxon>
        <taxon>Acaryochloridales</taxon>
        <taxon>Acaryochloridaceae</taxon>
        <taxon>Acaryochloris</taxon>
    </lineage>
</organism>
<feature type="chain" id="PRO_1000076091" description="Elongation factor Tu">
    <location>
        <begin position="1"/>
        <end position="409"/>
    </location>
</feature>
<feature type="domain" description="tr-type G">
    <location>
        <begin position="10"/>
        <end position="214"/>
    </location>
</feature>
<feature type="region of interest" description="G1" evidence="1">
    <location>
        <begin position="19"/>
        <end position="26"/>
    </location>
</feature>
<feature type="region of interest" description="G2" evidence="1">
    <location>
        <begin position="60"/>
        <end position="64"/>
    </location>
</feature>
<feature type="region of interest" description="G3" evidence="1">
    <location>
        <begin position="81"/>
        <end position="84"/>
    </location>
</feature>
<feature type="region of interest" description="G4" evidence="1">
    <location>
        <begin position="136"/>
        <end position="139"/>
    </location>
</feature>
<feature type="region of interest" description="G5" evidence="1">
    <location>
        <begin position="174"/>
        <end position="176"/>
    </location>
</feature>
<feature type="binding site" evidence="2">
    <location>
        <begin position="19"/>
        <end position="26"/>
    </location>
    <ligand>
        <name>GTP</name>
        <dbReference type="ChEBI" id="CHEBI:37565"/>
    </ligand>
</feature>
<feature type="binding site" evidence="2">
    <location>
        <position position="26"/>
    </location>
    <ligand>
        <name>Mg(2+)</name>
        <dbReference type="ChEBI" id="CHEBI:18420"/>
    </ligand>
</feature>
<feature type="binding site" evidence="2">
    <location>
        <begin position="81"/>
        <end position="85"/>
    </location>
    <ligand>
        <name>GTP</name>
        <dbReference type="ChEBI" id="CHEBI:37565"/>
    </ligand>
</feature>
<feature type="binding site" evidence="2">
    <location>
        <begin position="136"/>
        <end position="139"/>
    </location>
    <ligand>
        <name>GTP</name>
        <dbReference type="ChEBI" id="CHEBI:37565"/>
    </ligand>
</feature>
<reference key="1">
    <citation type="journal article" date="2008" name="Proc. Natl. Acad. Sci. U.S.A.">
        <title>Niche adaptation and genome expansion in the chlorophyll d-producing cyanobacterium Acaryochloris marina.</title>
        <authorList>
            <person name="Swingley W.D."/>
            <person name="Chen M."/>
            <person name="Cheung P.C."/>
            <person name="Conrad A.L."/>
            <person name="Dejesa L.C."/>
            <person name="Hao J."/>
            <person name="Honchak B.M."/>
            <person name="Karbach L.E."/>
            <person name="Kurdoglu A."/>
            <person name="Lahiri S."/>
            <person name="Mastrian S.D."/>
            <person name="Miyashita H."/>
            <person name="Page L."/>
            <person name="Ramakrishna P."/>
            <person name="Satoh S."/>
            <person name="Sattley W.M."/>
            <person name="Shimada Y."/>
            <person name="Taylor H.L."/>
            <person name="Tomo T."/>
            <person name="Tsuchiya T."/>
            <person name="Wang Z.T."/>
            <person name="Raymond J."/>
            <person name="Mimuro M."/>
            <person name="Blankenship R.E."/>
            <person name="Touchman J.W."/>
        </authorList>
    </citation>
    <scope>NUCLEOTIDE SEQUENCE [LARGE SCALE GENOMIC DNA]</scope>
    <source>
        <strain>MBIC 11017</strain>
    </source>
</reference>
<proteinExistence type="inferred from homology"/>
<sequence>MARAKFERTKPHVNIGTIGHVDHGKTTLTAAITMSLAALGQAKARKYDDIDAAPEERERGITINTAHVEYETQDRHYAHVDCPGHADYVKNMITGAAQMDGAVLVVSAADGPMPQTREHILLAKQVGVPNIVVFMNKQDQVDDEELLELVELEVRELLNDYDFPGDDIPIVSGSALMALEALNGADSMKKGDNEWVDKIYKLMEEVDAYIPTPERDVDKPFLMAVEDVFSITGRGTVATGRIERGKVVVGETVELVGIRDTRSTTVTGVEMFQKTLDEGMAGDNVGLLLRGVQKEDIERGMVLAKPGSITPHTQFESEVYILKKDEGGRHTPFFPGYRPQFYVRTTDVTGTISAFTADDGSAAEMVMPGDRIKMTVELINPIAIEQGMRFAIREGGRTVGAGVVSKILK</sequence>
<dbReference type="EC" id="3.6.5.3" evidence="2"/>
<dbReference type="EMBL" id="CP000828">
    <property type="protein sequence ID" value="ABW26815.1"/>
    <property type="molecule type" value="Genomic_DNA"/>
</dbReference>
<dbReference type="RefSeq" id="WP_012162324.1">
    <property type="nucleotide sequence ID" value="NC_009925.1"/>
</dbReference>
<dbReference type="SMR" id="B0CCD0"/>
<dbReference type="STRING" id="329726.AM1_1794"/>
<dbReference type="KEGG" id="amr:AM1_1794"/>
<dbReference type="eggNOG" id="COG0050">
    <property type="taxonomic scope" value="Bacteria"/>
</dbReference>
<dbReference type="HOGENOM" id="CLU_007265_0_1_3"/>
<dbReference type="OrthoDB" id="9804504at2"/>
<dbReference type="Proteomes" id="UP000000268">
    <property type="component" value="Chromosome"/>
</dbReference>
<dbReference type="GO" id="GO:0005829">
    <property type="term" value="C:cytosol"/>
    <property type="evidence" value="ECO:0007669"/>
    <property type="project" value="TreeGrafter"/>
</dbReference>
<dbReference type="GO" id="GO:0005525">
    <property type="term" value="F:GTP binding"/>
    <property type="evidence" value="ECO:0007669"/>
    <property type="project" value="UniProtKB-UniRule"/>
</dbReference>
<dbReference type="GO" id="GO:0003924">
    <property type="term" value="F:GTPase activity"/>
    <property type="evidence" value="ECO:0007669"/>
    <property type="project" value="InterPro"/>
</dbReference>
<dbReference type="GO" id="GO:0003746">
    <property type="term" value="F:translation elongation factor activity"/>
    <property type="evidence" value="ECO:0007669"/>
    <property type="project" value="UniProtKB-UniRule"/>
</dbReference>
<dbReference type="CDD" id="cd01884">
    <property type="entry name" value="EF_Tu"/>
    <property type="match status" value="1"/>
</dbReference>
<dbReference type="CDD" id="cd03697">
    <property type="entry name" value="EFTU_II"/>
    <property type="match status" value="1"/>
</dbReference>
<dbReference type="CDD" id="cd03707">
    <property type="entry name" value="EFTU_III"/>
    <property type="match status" value="1"/>
</dbReference>
<dbReference type="FunFam" id="2.40.30.10:FF:000001">
    <property type="entry name" value="Elongation factor Tu"/>
    <property type="match status" value="1"/>
</dbReference>
<dbReference type="FunFam" id="2.40.30.10:FF:000046">
    <property type="entry name" value="Elongation factor Tu"/>
    <property type="match status" value="1"/>
</dbReference>
<dbReference type="FunFam" id="3.40.50.300:FF:000003">
    <property type="entry name" value="Elongation factor Tu"/>
    <property type="match status" value="1"/>
</dbReference>
<dbReference type="Gene3D" id="3.40.50.300">
    <property type="entry name" value="P-loop containing nucleotide triphosphate hydrolases"/>
    <property type="match status" value="1"/>
</dbReference>
<dbReference type="Gene3D" id="2.40.30.10">
    <property type="entry name" value="Translation factors"/>
    <property type="match status" value="2"/>
</dbReference>
<dbReference type="HAMAP" id="MF_00118_B">
    <property type="entry name" value="EF_Tu_B"/>
    <property type="match status" value="1"/>
</dbReference>
<dbReference type="InterPro" id="IPR041709">
    <property type="entry name" value="EF-Tu_GTP-bd"/>
</dbReference>
<dbReference type="InterPro" id="IPR050055">
    <property type="entry name" value="EF-Tu_GTPase"/>
</dbReference>
<dbReference type="InterPro" id="IPR004161">
    <property type="entry name" value="EFTu-like_2"/>
</dbReference>
<dbReference type="InterPro" id="IPR033720">
    <property type="entry name" value="EFTU_2"/>
</dbReference>
<dbReference type="InterPro" id="IPR031157">
    <property type="entry name" value="G_TR_CS"/>
</dbReference>
<dbReference type="InterPro" id="IPR027417">
    <property type="entry name" value="P-loop_NTPase"/>
</dbReference>
<dbReference type="InterPro" id="IPR005225">
    <property type="entry name" value="Small_GTP-bd"/>
</dbReference>
<dbReference type="InterPro" id="IPR000795">
    <property type="entry name" value="T_Tr_GTP-bd_dom"/>
</dbReference>
<dbReference type="InterPro" id="IPR009000">
    <property type="entry name" value="Transl_B-barrel_sf"/>
</dbReference>
<dbReference type="InterPro" id="IPR009001">
    <property type="entry name" value="Transl_elong_EF1A/Init_IF2_C"/>
</dbReference>
<dbReference type="InterPro" id="IPR004541">
    <property type="entry name" value="Transl_elong_EFTu/EF1A_bac/org"/>
</dbReference>
<dbReference type="InterPro" id="IPR004160">
    <property type="entry name" value="Transl_elong_EFTu/EF1A_C"/>
</dbReference>
<dbReference type="NCBIfam" id="TIGR00485">
    <property type="entry name" value="EF-Tu"/>
    <property type="match status" value="1"/>
</dbReference>
<dbReference type="NCBIfam" id="NF000766">
    <property type="entry name" value="PRK00049.1"/>
    <property type="match status" value="1"/>
</dbReference>
<dbReference type="NCBIfam" id="NF009372">
    <property type="entry name" value="PRK12735.1"/>
    <property type="match status" value="1"/>
</dbReference>
<dbReference type="NCBIfam" id="NF009373">
    <property type="entry name" value="PRK12736.1"/>
    <property type="match status" value="1"/>
</dbReference>
<dbReference type="NCBIfam" id="TIGR00231">
    <property type="entry name" value="small_GTP"/>
    <property type="match status" value="1"/>
</dbReference>
<dbReference type="PANTHER" id="PTHR43721:SF22">
    <property type="entry name" value="ELONGATION FACTOR TU, MITOCHONDRIAL"/>
    <property type="match status" value="1"/>
</dbReference>
<dbReference type="PANTHER" id="PTHR43721">
    <property type="entry name" value="ELONGATION FACTOR TU-RELATED"/>
    <property type="match status" value="1"/>
</dbReference>
<dbReference type="Pfam" id="PF00009">
    <property type="entry name" value="GTP_EFTU"/>
    <property type="match status" value="1"/>
</dbReference>
<dbReference type="Pfam" id="PF03144">
    <property type="entry name" value="GTP_EFTU_D2"/>
    <property type="match status" value="1"/>
</dbReference>
<dbReference type="Pfam" id="PF03143">
    <property type="entry name" value="GTP_EFTU_D3"/>
    <property type="match status" value="1"/>
</dbReference>
<dbReference type="PRINTS" id="PR00315">
    <property type="entry name" value="ELONGATNFCT"/>
</dbReference>
<dbReference type="SUPFAM" id="SSF50465">
    <property type="entry name" value="EF-Tu/eEF-1alpha/eIF2-gamma C-terminal domain"/>
    <property type="match status" value="1"/>
</dbReference>
<dbReference type="SUPFAM" id="SSF52540">
    <property type="entry name" value="P-loop containing nucleoside triphosphate hydrolases"/>
    <property type="match status" value="1"/>
</dbReference>
<dbReference type="SUPFAM" id="SSF50447">
    <property type="entry name" value="Translation proteins"/>
    <property type="match status" value="1"/>
</dbReference>
<dbReference type="PROSITE" id="PS00301">
    <property type="entry name" value="G_TR_1"/>
    <property type="match status" value="1"/>
</dbReference>
<dbReference type="PROSITE" id="PS51722">
    <property type="entry name" value="G_TR_2"/>
    <property type="match status" value="1"/>
</dbReference>
<gene>
    <name evidence="2" type="primary">tuf</name>
    <name type="ordered locus">AM1_1794</name>
</gene>